<comment type="subcellular location">
    <subcellularLocation>
        <location evidence="3">Nucleus</location>
    </subcellularLocation>
</comment>
<comment type="developmental stage">
    <text>Appears at the beginning of gastrulation. Plateau between the neurula and middle-tailbud stages, and decrease steadily thereafter.</text>
</comment>
<comment type="similarity">
    <text evidence="3">Belongs to the Msh homeobox family.</text>
</comment>
<protein>
    <recommendedName>
        <fullName>Homeobox protein XHOX-7.1</fullName>
    </recommendedName>
</protein>
<sequence>GDSLYGSHSPTVTSQLGSLCMAPALLMASYQPGVKIEERPLNRMQQTGVKPSLGEDKPKVPGILPFSVEALMADRKPGRDRDLSSPTGSPLAGTSHSPRVGSIAAGETPNSPISLGNRYPVGAIMQLPEETLLKPESPERSSWIQSPSFSPSPTRRMSPPACPLRKHKTNRKPRTPFTTSQLLALERKFRQKQYLSIAERAEFSSSLNLTETQVKIWFQNRRAKAKRLQEAELEKLKMAAKPMLPPAFGISFPLGTPVPTASLYGTSNPFQRQALPMSPMGLYTAHLGYSMYHLS</sequence>
<organism>
    <name type="scientific">Xenopus laevis</name>
    <name type="common">African clawed frog</name>
    <dbReference type="NCBI Taxonomy" id="8355"/>
    <lineage>
        <taxon>Eukaryota</taxon>
        <taxon>Metazoa</taxon>
        <taxon>Chordata</taxon>
        <taxon>Craniata</taxon>
        <taxon>Vertebrata</taxon>
        <taxon>Euteleostomi</taxon>
        <taxon>Amphibia</taxon>
        <taxon>Batrachia</taxon>
        <taxon>Anura</taxon>
        <taxon>Pipoidea</taxon>
        <taxon>Pipidae</taxon>
        <taxon>Xenopodinae</taxon>
        <taxon>Xenopus</taxon>
        <taxon>Xenopus</taxon>
    </lineage>
</organism>
<keyword id="KW-0217">Developmental protein</keyword>
<keyword id="KW-0238">DNA-binding</keyword>
<keyword id="KW-0371">Homeobox</keyword>
<keyword id="KW-0539">Nucleus</keyword>
<keyword id="KW-1185">Reference proteome</keyword>
<dbReference type="EMBL" id="X58773">
    <property type="protein sequence ID" value="CAA41574.1"/>
    <property type="molecule type" value="mRNA"/>
</dbReference>
<dbReference type="PIR" id="A60131">
    <property type="entry name" value="A60131"/>
</dbReference>
<dbReference type="SMR" id="Q04281"/>
<dbReference type="AGR" id="Xenbase:XB-GENE-6253888"/>
<dbReference type="Xenbase" id="XB-GENE-6253888">
    <property type="gene designation" value="msx1.S"/>
</dbReference>
<dbReference type="Proteomes" id="UP000186698">
    <property type="component" value="Unplaced"/>
</dbReference>
<dbReference type="GO" id="GO:0005634">
    <property type="term" value="C:nucleus"/>
    <property type="evidence" value="ECO:0000318"/>
    <property type="project" value="GO_Central"/>
</dbReference>
<dbReference type="GO" id="GO:0000981">
    <property type="term" value="F:DNA-binding transcription factor activity, RNA polymerase II-specific"/>
    <property type="evidence" value="ECO:0000318"/>
    <property type="project" value="GO_Central"/>
</dbReference>
<dbReference type="GO" id="GO:0000977">
    <property type="term" value="F:RNA polymerase II transcription regulatory region sequence-specific DNA binding"/>
    <property type="evidence" value="ECO:0000318"/>
    <property type="project" value="GO_Central"/>
</dbReference>
<dbReference type="GO" id="GO:0048598">
    <property type="term" value="P:embryonic morphogenesis"/>
    <property type="evidence" value="ECO:0000318"/>
    <property type="project" value="GO_Central"/>
</dbReference>
<dbReference type="GO" id="GO:0006357">
    <property type="term" value="P:regulation of transcription by RNA polymerase II"/>
    <property type="evidence" value="ECO:0000318"/>
    <property type="project" value="GO_Central"/>
</dbReference>
<dbReference type="CDD" id="cd00086">
    <property type="entry name" value="homeodomain"/>
    <property type="match status" value="1"/>
</dbReference>
<dbReference type="FunFam" id="1.10.10.60:FF:000134">
    <property type="entry name" value="Homeobox protein MSX-1"/>
    <property type="match status" value="1"/>
</dbReference>
<dbReference type="Gene3D" id="1.10.10.60">
    <property type="entry name" value="Homeodomain-like"/>
    <property type="match status" value="1"/>
</dbReference>
<dbReference type="InterPro" id="IPR001356">
    <property type="entry name" value="HD"/>
</dbReference>
<dbReference type="InterPro" id="IPR020479">
    <property type="entry name" value="HD_metazoa"/>
</dbReference>
<dbReference type="InterPro" id="IPR017970">
    <property type="entry name" value="Homeobox_CS"/>
</dbReference>
<dbReference type="InterPro" id="IPR009057">
    <property type="entry name" value="Homeodomain-like_sf"/>
</dbReference>
<dbReference type="InterPro" id="IPR050674">
    <property type="entry name" value="Msh_Homeobox_Regulators"/>
</dbReference>
<dbReference type="PANTHER" id="PTHR24338">
    <property type="entry name" value="HOMEOBOX PROTEIN MSX"/>
    <property type="match status" value="1"/>
</dbReference>
<dbReference type="PANTHER" id="PTHR24338:SF8">
    <property type="entry name" value="HOMEOBOX PROTEIN MSX-1"/>
    <property type="match status" value="1"/>
</dbReference>
<dbReference type="Pfam" id="PF00046">
    <property type="entry name" value="Homeodomain"/>
    <property type="match status" value="1"/>
</dbReference>
<dbReference type="PRINTS" id="PR00024">
    <property type="entry name" value="HOMEOBOX"/>
</dbReference>
<dbReference type="SMART" id="SM00389">
    <property type="entry name" value="HOX"/>
    <property type="match status" value="1"/>
</dbReference>
<dbReference type="SUPFAM" id="SSF46689">
    <property type="entry name" value="Homeodomain-like"/>
    <property type="match status" value="1"/>
</dbReference>
<dbReference type="PROSITE" id="PS00027">
    <property type="entry name" value="HOMEOBOX_1"/>
    <property type="match status" value="1"/>
</dbReference>
<dbReference type="PROSITE" id="PS50071">
    <property type="entry name" value="HOMEOBOX_2"/>
    <property type="match status" value="1"/>
</dbReference>
<feature type="chain" id="PRO_0000049145" description="Homeobox protein XHOX-7.1">
    <location>
        <begin position="1" status="less than"/>
        <end position="295"/>
    </location>
</feature>
<feature type="DNA-binding region" description="Homeobox" evidence="1">
    <location>
        <begin position="170"/>
        <end position="229"/>
    </location>
</feature>
<feature type="region of interest" description="Disordered" evidence="2">
    <location>
        <begin position="75"/>
        <end position="115"/>
    </location>
</feature>
<feature type="region of interest" description="Disordered" evidence="2">
    <location>
        <begin position="134"/>
        <end position="175"/>
    </location>
</feature>
<feature type="compositionally biased region" description="Polar residues" evidence="2">
    <location>
        <begin position="84"/>
        <end position="97"/>
    </location>
</feature>
<feature type="compositionally biased region" description="Low complexity" evidence="2">
    <location>
        <begin position="141"/>
        <end position="153"/>
    </location>
</feature>
<feature type="compositionally biased region" description="Basic residues" evidence="2">
    <location>
        <begin position="164"/>
        <end position="174"/>
    </location>
</feature>
<feature type="non-terminal residue">
    <location>
        <position position="1"/>
    </location>
</feature>
<name>HOX71_XENLA</name>
<reference key="1">
    <citation type="journal article" date="1991" name="Development">
        <title>Progressively restricted expression of a new homeobox-containing gene during Xenopus laevis embryogenesis.</title>
        <authorList>
            <person name="Su M.-W."/>
            <person name="Suzuki H.R."/>
            <person name="Solursh M."/>
            <person name="Ramirez F."/>
        </authorList>
    </citation>
    <scope>NUCLEOTIDE SEQUENCE [MRNA]</scope>
</reference>
<accession>Q04281</accession>
<proteinExistence type="evidence at transcript level"/>
<evidence type="ECO:0000255" key="1">
    <source>
        <dbReference type="PROSITE-ProRule" id="PRU00108"/>
    </source>
</evidence>
<evidence type="ECO:0000256" key="2">
    <source>
        <dbReference type="SAM" id="MobiDB-lite"/>
    </source>
</evidence>
<evidence type="ECO:0000305" key="3"/>